<name>ISPH_CLOTE</name>
<feature type="chain" id="PRO_0000128908" description="4-hydroxy-3-methylbut-2-enyl diphosphate reductase">
    <location>
        <begin position="1"/>
        <end position="635"/>
    </location>
</feature>
<feature type="domain" description="S1 motif 1">
    <location>
        <begin position="298"/>
        <end position="373"/>
    </location>
</feature>
<feature type="domain" description="S1 motif 2">
    <location>
        <begin position="380"/>
        <end position="455"/>
    </location>
</feature>
<feature type="domain" description="S1 motif 3">
    <location>
        <begin position="476"/>
        <end position="544"/>
    </location>
</feature>
<feature type="domain" description="S1 motif 4">
    <location>
        <begin position="561"/>
        <end position="630"/>
    </location>
</feature>
<feature type="region of interest" description="4-hydroxy-3-methylbut-2-enyl diphosphate reductase">
    <location>
        <begin position="1"/>
        <end position="279"/>
    </location>
</feature>
<feature type="active site" description="Proton donor" evidence="1">
    <location>
        <position position="129"/>
    </location>
</feature>
<feature type="binding site" evidence="1">
    <location>
        <position position="12"/>
    </location>
    <ligand>
        <name>[4Fe-4S] cluster</name>
        <dbReference type="ChEBI" id="CHEBI:49883"/>
    </ligand>
</feature>
<feature type="binding site" evidence="1">
    <location>
        <position position="42"/>
    </location>
    <ligand>
        <name>(2E)-4-hydroxy-3-methylbut-2-enyl diphosphate</name>
        <dbReference type="ChEBI" id="CHEBI:128753"/>
    </ligand>
</feature>
<feature type="binding site" evidence="1">
    <location>
        <position position="42"/>
    </location>
    <ligand>
        <name>dimethylallyl diphosphate</name>
        <dbReference type="ChEBI" id="CHEBI:57623"/>
    </ligand>
</feature>
<feature type="binding site" evidence="1">
    <location>
        <position position="42"/>
    </location>
    <ligand>
        <name>isopentenyl diphosphate</name>
        <dbReference type="ChEBI" id="CHEBI:128769"/>
    </ligand>
</feature>
<feature type="binding site" evidence="1">
    <location>
        <position position="77"/>
    </location>
    <ligand>
        <name>(2E)-4-hydroxy-3-methylbut-2-enyl diphosphate</name>
        <dbReference type="ChEBI" id="CHEBI:128753"/>
    </ligand>
</feature>
<feature type="binding site" evidence="1">
    <location>
        <position position="77"/>
    </location>
    <ligand>
        <name>dimethylallyl diphosphate</name>
        <dbReference type="ChEBI" id="CHEBI:57623"/>
    </ligand>
</feature>
<feature type="binding site" evidence="1">
    <location>
        <position position="77"/>
    </location>
    <ligand>
        <name>isopentenyl diphosphate</name>
        <dbReference type="ChEBI" id="CHEBI:128769"/>
    </ligand>
</feature>
<feature type="binding site" evidence="1">
    <location>
        <position position="99"/>
    </location>
    <ligand>
        <name>[4Fe-4S] cluster</name>
        <dbReference type="ChEBI" id="CHEBI:49883"/>
    </ligand>
</feature>
<feature type="binding site" evidence="1">
    <location>
        <position position="127"/>
    </location>
    <ligand>
        <name>(2E)-4-hydroxy-3-methylbut-2-enyl diphosphate</name>
        <dbReference type="ChEBI" id="CHEBI:128753"/>
    </ligand>
</feature>
<feature type="binding site" evidence="1">
    <location>
        <position position="127"/>
    </location>
    <ligand>
        <name>dimethylallyl diphosphate</name>
        <dbReference type="ChEBI" id="CHEBI:57623"/>
    </ligand>
</feature>
<feature type="binding site" evidence="1">
    <location>
        <position position="127"/>
    </location>
    <ligand>
        <name>isopentenyl diphosphate</name>
        <dbReference type="ChEBI" id="CHEBI:128769"/>
    </ligand>
</feature>
<feature type="binding site" evidence="1">
    <location>
        <position position="163"/>
    </location>
    <ligand>
        <name>(2E)-4-hydroxy-3-methylbut-2-enyl diphosphate</name>
        <dbReference type="ChEBI" id="CHEBI:128753"/>
    </ligand>
</feature>
<feature type="binding site" evidence="1">
    <location>
        <position position="191"/>
    </location>
    <ligand>
        <name>[4Fe-4S] cluster</name>
        <dbReference type="ChEBI" id="CHEBI:49883"/>
    </ligand>
</feature>
<feature type="binding site" evidence="1">
    <location>
        <position position="219"/>
    </location>
    <ligand>
        <name>(2E)-4-hydroxy-3-methylbut-2-enyl diphosphate</name>
        <dbReference type="ChEBI" id="CHEBI:128753"/>
    </ligand>
</feature>
<feature type="binding site" evidence="1">
    <location>
        <position position="219"/>
    </location>
    <ligand>
        <name>dimethylallyl diphosphate</name>
        <dbReference type="ChEBI" id="CHEBI:57623"/>
    </ligand>
</feature>
<feature type="binding site" evidence="1">
    <location>
        <position position="219"/>
    </location>
    <ligand>
        <name>isopentenyl diphosphate</name>
        <dbReference type="ChEBI" id="CHEBI:128769"/>
    </ligand>
</feature>
<feature type="binding site" evidence="1">
    <location>
        <position position="220"/>
    </location>
    <ligand>
        <name>(2E)-4-hydroxy-3-methylbut-2-enyl diphosphate</name>
        <dbReference type="ChEBI" id="CHEBI:128753"/>
    </ligand>
</feature>
<feature type="binding site" evidence="1">
    <location>
        <position position="220"/>
    </location>
    <ligand>
        <name>dimethylallyl diphosphate</name>
        <dbReference type="ChEBI" id="CHEBI:57623"/>
    </ligand>
</feature>
<feature type="binding site" evidence="1">
    <location>
        <position position="220"/>
    </location>
    <ligand>
        <name>isopentenyl diphosphate</name>
        <dbReference type="ChEBI" id="CHEBI:128769"/>
    </ligand>
</feature>
<feature type="binding site" evidence="1">
    <location>
        <position position="221"/>
    </location>
    <ligand>
        <name>(2E)-4-hydroxy-3-methylbut-2-enyl diphosphate</name>
        <dbReference type="ChEBI" id="CHEBI:128753"/>
    </ligand>
</feature>
<feature type="binding site" evidence="1">
    <location>
        <position position="221"/>
    </location>
    <ligand>
        <name>dimethylallyl diphosphate</name>
        <dbReference type="ChEBI" id="CHEBI:57623"/>
    </ligand>
</feature>
<feature type="binding site" evidence="1">
    <location>
        <position position="221"/>
    </location>
    <ligand>
        <name>isopentenyl diphosphate</name>
        <dbReference type="ChEBI" id="CHEBI:128769"/>
    </ligand>
</feature>
<feature type="binding site" evidence="1">
    <location>
        <position position="263"/>
    </location>
    <ligand>
        <name>(2E)-4-hydroxy-3-methylbut-2-enyl diphosphate</name>
        <dbReference type="ChEBI" id="CHEBI:128753"/>
    </ligand>
</feature>
<feature type="binding site" evidence="1">
    <location>
        <position position="263"/>
    </location>
    <ligand>
        <name>dimethylallyl diphosphate</name>
        <dbReference type="ChEBI" id="CHEBI:57623"/>
    </ligand>
</feature>
<feature type="binding site" evidence="1">
    <location>
        <position position="263"/>
    </location>
    <ligand>
        <name>isopentenyl diphosphate</name>
        <dbReference type="ChEBI" id="CHEBI:128769"/>
    </ligand>
</feature>
<keyword id="KW-0004">4Fe-4S</keyword>
<keyword id="KW-0408">Iron</keyword>
<keyword id="KW-0411">Iron-sulfur</keyword>
<keyword id="KW-0414">Isoprene biosynthesis</keyword>
<keyword id="KW-0479">Metal-binding</keyword>
<keyword id="KW-0560">Oxidoreductase</keyword>
<keyword id="KW-1185">Reference proteome</keyword>
<evidence type="ECO:0000255" key="1">
    <source>
        <dbReference type="HAMAP-Rule" id="MF_00191"/>
    </source>
</evidence>
<evidence type="ECO:0000305" key="2"/>
<proteinExistence type="inferred from homology"/>
<sequence>MSIILAKKSGFCYGVKRAVDTCLKIKQNYPDKIIYTLGPLIHNNDVVDFLKTKNIFSIGYENIDTLKEGDIIILRSHGVTLETIQKLKEKKLNIIDATCPYVSNIQKKAQKYYKEGYSILIVGDKNHPEVIGINGWCNNSAIICRKAEEIEDLPKKICVVSQTTEKKEHWISVLSKVVNECREVVAFNTICNATEVRQLSAEDLSKEVDFMIVIGSKSSSNTTKLYEICKNNCSNTIHIENAGELPDYISNKYSKIGVTAGASTPDWIIKEAIFKMSNKNLNEQLEYMENNDIQISIGQEVEGEIVSIVSSNEAYVNIGYKSDAILLLSEVTKDNDEDINNFVKKGDIIKGKIIKLGSENKPPVISVIELNRENAYVELKEAFENKEKVVVKVKEDVNGGLISIYKNIVRVFIPASHVELRHVDDLSIYKGCELTVNIIEFEEGRNNTRIVASRRDLLKEEQSKVEEETWSSLEKDTIKEGEVRRLTDFGAFVNINGVDGLLHVSEISWGRVEKPSDMLKVGDKIKVYIKDIDKDKKKLALSIKDLTKDPWKDVEVKYPVGNIVLGTVVRFASFGAFVELEPGVDGLIHISQISHKRVDRVEDELSIGEQVKAKIVEVDGEKRKIGLSIKEVNDI</sequence>
<comment type="function">
    <text evidence="1">Catalyzes the conversion of 1-hydroxy-2-methyl-2-(E)-butenyl 4-diphosphate (HMBPP) into a mixture of isopentenyl diphosphate (IPP) and dimethylallyl diphosphate (DMAPP). Acts in the terminal step of the DOXP/MEP pathway for isoprenoid precursor biosynthesis.</text>
</comment>
<comment type="catalytic activity">
    <reaction evidence="1">
        <text>isopentenyl diphosphate + 2 oxidized [2Fe-2S]-[ferredoxin] + H2O = (2E)-4-hydroxy-3-methylbut-2-enyl diphosphate + 2 reduced [2Fe-2S]-[ferredoxin] + 2 H(+)</text>
        <dbReference type="Rhea" id="RHEA:24488"/>
        <dbReference type="Rhea" id="RHEA-COMP:10000"/>
        <dbReference type="Rhea" id="RHEA-COMP:10001"/>
        <dbReference type="ChEBI" id="CHEBI:15377"/>
        <dbReference type="ChEBI" id="CHEBI:15378"/>
        <dbReference type="ChEBI" id="CHEBI:33737"/>
        <dbReference type="ChEBI" id="CHEBI:33738"/>
        <dbReference type="ChEBI" id="CHEBI:128753"/>
        <dbReference type="ChEBI" id="CHEBI:128769"/>
        <dbReference type="EC" id="1.17.7.4"/>
    </reaction>
</comment>
<comment type="catalytic activity">
    <reaction evidence="1">
        <text>dimethylallyl diphosphate + 2 oxidized [2Fe-2S]-[ferredoxin] + H2O = (2E)-4-hydroxy-3-methylbut-2-enyl diphosphate + 2 reduced [2Fe-2S]-[ferredoxin] + 2 H(+)</text>
        <dbReference type="Rhea" id="RHEA:24825"/>
        <dbReference type="Rhea" id="RHEA-COMP:10000"/>
        <dbReference type="Rhea" id="RHEA-COMP:10001"/>
        <dbReference type="ChEBI" id="CHEBI:15377"/>
        <dbReference type="ChEBI" id="CHEBI:15378"/>
        <dbReference type="ChEBI" id="CHEBI:33737"/>
        <dbReference type="ChEBI" id="CHEBI:33738"/>
        <dbReference type="ChEBI" id="CHEBI:57623"/>
        <dbReference type="ChEBI" id="CHEBI:128753"/>
        <dbReference type="EC" id="1.17.7.4"/>
    </reaction>
</comment>
<comment type="cofactor">
    <cofactor evidence="1">
        <name>[4Fe-4S] cluster</name>
        <dbReference type="ChEBI" id="CHEBI:49883"/>
    </cofactor>
    <text evidence="1">Binds 1 [4Fe-4S] cluster per subunit.</text>
</comment>
<comment type="pathway">
    <text evidence="1">Isoprenoid biosynthesis; dimethylallyl diphosphate biosynthesis; dimethylallyl diphosphate from (2E)-4-hydroxy-3-methylbutenyl diphosphate: step 1/1.</text>
</comment>
<comment type="pathway">
    <text evidence="1">Isoprenoid biosynthesis; isopentenyl diphosphate biosynthesis via DXP pathway; isopentenyl diphosphate from 1-deoxy-D-xylulose 5-phosphate: step 6/6.</text>
</comment>
<comment type="similarity">
    <text evidence="2">In the N-terminal section; belongs to the IspH family.</text>
</comment>
<reference key="1">
    <citation type="journal article" date="2003" name="Proc. Natl. Acad. Sci. U.S.A.">
        <title>The genome sequence of Clostridium tetani, the causative agent of tetanus disease.</title>
        <authorList>
            <person name="Brueggemann H."/>
            <person name="Baeumer S."/>
            <person name="Fricke W.F."/>
            <person name="Wiezer A."/>
            <person name="Liesegang H."/>
            <person name="Decker I."/>
            <person name="Herzberg C."/>
            <person name="Martinez-Arias R."/>
            <person name="Merkl R."/>
            <person name="Henne A."/>
            <person name="Gottschalk G."/>
        </authorList>
    </citation>
    <scope>NUCLEOTIDE SEQUENCE [LARGE SCALE GENOMIC DNA]</scope>
    <source>
        <strain>Massachusetts / E88</strain>
    </source>
</reference>
<protein>
    <recommendedName>
        <fullName evidence="1">4-hydroxy-3-methylbut-2-enyl diphosphate reductase</fullName>
        <shortName evidence="1">HMBPP reductase</shortName>
        <ecNumber evidence="1">1.17.7.4</ecNumber>
    </recommendedName>
</protein>
<dbReference type="EC" id="1.17.7.4" evidence="1"/>
<dbReference type="EMBL" id="AE015927">
    <property type="protein sequence ID" value="AAO35878.1"/>
    <property type="molecule type" value="Genomic_DNA"/>
</dbReference>
<dbReference type="RefSeq" id="WP_011099540.1">
    <property type="nucleotide sequence ID" value="NC_004557.1"/>
</dbReference>
<dbReference type="SMR" id="Q895G2"/>
<dbReference type="STRING" id="212717.CTC_01314"/>
<dbReference type="GeneID" id="24255140"/>
<dbReference type="KEGG" id="ctc:CTC_01314"/>
<dbReference type="HOGENOM" id="CLU_015805_3_1_9"/>
<dbReference type="OrthoDB" id="9804077at2"/>
<dbReference type="UniPathway" id="UPA00056">
    <property type="reaction ID" value="UER00097"/>
</dbReference>
<dbReference type="UniPathway" id="UPA00059">
    <property type="reaction ID" value="UER00105"/>
</dbReference>
<dbReference type="Proteomes" id="UP000001412">
    <property type="component" value="Chromosome"/>
</dbReference>
<dbReference type="GO" id="GO:0051539">
    <property type="term" value="F:4 iron, 4 sulfur cluster binding"/>
    <property type="evidence" value="ECO:0007669"/>
    <property type="project" value="UniProtKB-UniRule"/>
</dbReference>
<dbReference type="GO" id="GO:0051745">
    <property type="term" value="F:4-hydroxy-3-methylbut-2-enyl diphosphate reductase activity"/>
    <property type="evidence" value="ECO:0007669"/>
    <property type="project" value="UniProtKB-UniRule"/>
</dbReference>
<dbReference type="GO" id="GO:0046872">
    <property type="term" value="F:metal ion binding"/>
    <property type="evidence" value="ECO:0007669"/>
    <property type="project" value="UniProtKB-KW"/>
</dbReference>
<dbReference type="GO" id="GO:0003676">
    <property type="term" value="F:nucleic acid binding"/>
    <property type="evidence" value="ECO:0007669"/>
    <property type="project" value="InterPro"/>
</dbReference>
<dbReference type="GO" id="GO:0050992">
    <property type="term" value="P:dimethylallyl diphosphate biosynthetic process"/>
    <property type="evidence" value="ECO:0007669"/>
    <property type="project" value="UniProtKB-UniRule"/>
</dbReference>
<dbReference type="GO" id="GO:0019288">
    <property type="term" value="P:isopentenyl diphosphate biosynthetic process, methylerythritol 4-phosphate pathway"/>
    <property type="evidence" value="ECO:0007669"/>
    <property type="project" value="UniProtKB-UniRule"/>
</dbReference>
<dbReference type="GO" id="GO:0016114">
    <property type="term" value="P:terpenoid biosynthetic process"/>
    <property type="evidence" value="ECO:0007669"/>
    <property type="project" value="UniProtKB-UniRule"/>
</dbReference>
<dbReference type="CDD" id="cd13944">
    <property type="entry name" value="lytB_ispH"/>
    <property type="match status" value="1"/>
</dbReference>
<dbReference type="CDD" id="cd04465">
    <property type="entry name" value="S1_RPS1_repeat_ec2_hs2"/>
    <property type="match status" value="1"/>
</dbReference>
<dbReference type="Gene3D" id="3.40.50.11270">
    <property type="match status" value="1"/>
</dbReference>
<dbReference type="Gene3D" id="3.40.1010.20">
    <property type="entry name" value="4-hydroxy-3-methylbut-2-enyl diphosphate reductase, catalytic domain"/>
    <property type="match status" value="2"/>
</dbReference>
<dbReference type="Gene3D" id="2.40.50.140">
    <property type="entry name" value="Nucleic acid-binding proteins"/>
    <property type="match status" value="3"/>
</dbReference>
<dbReference type="HAMAP" id="MF_00191">
    <property type="entry name" value="IspH"/>
    <property type="match status" value="1"/>
</dbReference>
<dbReference type="InterPro" id="IPR003451">
    <property type="entry name" value="LytB/IspH"/>
</dbReference>
<dbReference type="InterPro" id="IPR012340">
    <property type="entry name" value="NA-bd_OB-fold"/>
</dbReference>
<dbReference type="InterPro" id="IPR035104">
    <property type="entry name" value="Ribosomal_protein_S1-like"/>
</dbReference>
<dbReference type="InterPro" id="IPR003029">
    <property type="entry name" value="S1_domain"/>
</dbReference>
<dbReference type="NCBIfam" id="TIGR00216">
    <property type="entry name" value="ispH_lytB"/>
    <property type="match status" value="1"/>
</dbReference>
<dbReference type="NCBIfam" id="NF000907">
    <property type="entry name" value="PRK00087.1"/>
    <property type="match status" value="1"/>
</dbReference>
<dbReference type="NCBIfam" id="NF002187">
    <property type="entry name" value="PRK01045.1-1"/>
    <property type="match status" value="1"/>
</dbReference>
<dbReference type="PANTHER" id="PTHR30426">
    <property type="entry name" value="4-HYDROXY-3-METHYLBUT-2-ENYL DIPHOSPHATE REDUCTASE"/>
    <property type="match status" value="1"/>
</dbReference>
<dbReference type="PANTHER" id="PTHR30426:SF0">
    <property type="entry name" value="4-HYDROXY-3-METHYLBUT-2-ENYL DIPHOSPHATE REDUCTASE"/>
    <property type="match status" value="1"/>
</dbReference>
<dbReference type="Pfam" id="PF02401">
    <property type="entry name" value="LYTB"/>
    <property type="match status" value="1"/>
</dbReference>
<dbReference type="Pfam" id="PF00575">
    <property type="entry name" value="S1"/>
    <property type="match status" value="3"/>
</dbReference>
<dbReference type="PRINTS" id="PR00681">
    <property type="entry name" value="RIBOSOMALS1"/>
</dbReference>
<dbReference type="SMART" id="SM00316">
    <property type="entry name" value="S1"/>
    <property type="match status" value="4"/>
</dbReference>
<dbReference type="SUPFAM" id="SSF50249">
    <property type="entry name" value="Nucleic acid-binding proteins"/>
    <property type="match status" value="3"/>
</dbReference>
<dbReference type="PROSITE" id="PS50126">
    <property type="entry name" value="S1"/>
    <property type="match status" value="4"/>
</dbReference>
<gene>
    <name evidence="1" type="primary">ispH</name>
    <name type="ordered locus">CTC_01314</name>
</gene>
<organism>
    <name type="scientific">Clostridium tetani (strain Massachusetts / E88)</name>
    <dbReference type="NCBI Taxonomy" id="212717"/>
    <lineage>
        <taxon>Bacteria</taxon>
        <taxon>Bacillati</taxon>
        <taxon>Bacillota</taxon>
        <taxon>Clostridia</taxon>
        <taxon>Eubacteriales</taxon>
        <taxon>Clostridiaceae</taxon>
        <taxon>Clostridium</taxon>
    </lineage>
</organism>
<accession>Q895G2</accession>